<keyword id="KW-0378">Hydrolase</keyword>
<keyword id="KW-0441">Lipid A biosynthesis</keyword>
<keyword id="KW-0444">Lipid biosynthesis</keyword>
<keyword id="KW-0443">Lipid metabolism</keyword>
<keyword id="KW-0479">Metal-binding</keyword>
<keyword id="KW-1185">Reference proteome</keyword>
<keyword id="KW-0862">Zinc</keyword>
<organism>
    <name type="scientific">Blochmanniella pennsylvanica (strain BPEN)</name>
    <dbReference type="NCBI Taxonomy" id="291272"/>
    <lineage>
        <taxon>Bacteria</taxon>
        <taxon>Pseudomonadati</taxon>
        <taxon>Pseudomonadota</taxon>
        <taxon>Gammaproteobacteria</taxon>
        <taxon>Enterobacterales</taxon>
        <taxon>Enterobacteriaceae</taxon>
        <taxon>ant endosymbionts</taxon>
        <taxon>Candidatus Blochmanniella</taxon>
    </lineage>
</organism>
<proteinExistence type="inferred from homology"/>
<sequence>MIKQRTLKRVVQTTGVGLHTGKKVTLTLRPTSANTGIIYRRTDLYPPVDLQVNVKSVGNTVLCTCLINEYGVQIFTVEHLSAAQAGLGIDNIIIELNAPEVPIMDGSASPFVCLLLDAGIEELNSAKKFLRLKQTVRVEDGEKWAELRPFNGFTLDFTIDFNHPAINVDTQHCFFNFSSASFVHNISRARTFGFMRDIKDLQSRGFALGGSFNSAIIIDDYRVLNEDGLRFDDEFVRHKMLDAIGDLFMCGHNLIGSFIAFKSGHTLNNKLLKTVLSCQEAWELATFSNASDLPLVF</sequence>
<name>LPXC_BLOPB</name>
<comment type="function">
    <text evidence="1">Catalyzes the hydrolysis of UDP-3-O-myristoyl-N-acetylglucosamine to form UDP-3-O-myristoylglucosamine and acetate, the committed step in lipid A biosynthesis.</text>
</comment>
<comment type="catalytic activity">
    <reaction evidence="1">
        <text>a UDP-3-O-[(3R)-3-hydroxyacyl]-N-acetyl-alpha-D-glucosamine + H2O = a UDP-3-O-[(3R)-3-hydroxyacyl]-alpha-D-glucosamine + acetate</text>
        <dbReference type="Rhea" id="RHEA:67816"/>
        <dbReference type="ChEBI" id="CHEBI:15377"/>
        <dbReference type="ChEBI" id="CHEBI:30089"/>
        <dbReference type="ChEBI" id="CHEBI:137740"/>
        <dbReference type="ChEBI" id="CHEBI:173225"/>
        <dbReference type="EC" id="3.5.1.108"/>
    </reaction>
</comment>
<comment type="cofactor">
    <cofactor evidence="1">
        <name>Zn(2+)</name>
        <dbReference type="ChEBI" id="CHEBI:29105"/>
    </cofactor>
</comment>
<comment type="pathway">
    <text evidence="1">Glycolipid biosynthesis; lipid IV(A) biosynthesis; lipid IV(A) from (3R)-3-hydroxytetradecanoyl-[acyl-carrier-protein] and UDP-N-acetyl-alpha-D-glucosamine: step 2/6.</text>
</comment>
<comment type="similarity">
    <text evidence="1">Belongs to the LpxC family.</text>
</comment>
<evidence type="ECO:0000255" key="1">
    <source>
        <dbReference type="HAMAP-Rule" id="MF_00388"/>
    </source>
</evidence>
<protein>
    <recommendedName>
        <fullName evidence="1">UDP-3-O-acyl-N-acetylglucosamine deacetylase</fullName>
        <shortName evidence="1">UDP-3-O-acyl-GlcNAc deacetylase</shortName>
        <ecNumber evidence="1">3.5.1.108</ecNumber>
    </recommendedName>
    <alternativeName>
        <fullName evidence="1">UDP-3-O-[R-3-hydroxymyristoyl]-N-acetylglucosamine deacetylase</fullName>
    </alternativeName>
</protein>
<feature type="chain" id="PRO_0000253645" description="UDP-3-O-acyl-N-acetylglucosamine deacetylase">
    <location>
        <begin position="1"/>
        <end position="297"/>
    </location>
</feature>
<feature type="active site" description="Proton donor" evidence="1">
    <location>
        <position position="265"/>
    </location>
</feature>
<feature type="binding site" evidence="1">
    <location>
        <position position="79"/>
    </location>
    <ligand>
        <name>Zn(2+)</name>
        <dbReference type="ChEBI" id="CHEBI:29105"/>
    </ligand>
</feature>
<feature type="binding site" evidence="1">
    <location>
        <position position="238"/>
    </location>
    <ligand>
        <name>Zn(2+)</name>
        <dbReference type="ChEBI" id="CHEBI:29105"/>
    </ligand>
</feature>
<feature type="binding site" evidence="1">
    <location>
        <position position="242"/>
    </location>
    <ligand>
        <name>Zn(2+)</name>
        <dbReference type="ChEBI" id="CHEBI:29105"/>
    </ligand>
</feature>
<accession>Q493P6</accession>
<dbReference type="EC" id="3.5.1.108" evidence="1"/>
<dbReference type="EMBL" id="CP000016">
    <property type="protein sequence ID" value="AAZ40791.1"/>
    <property type="molecule type" value="Genomic_DNA"/>
</dbReference>
<dbReference type="RefSeq" id="WP_011282698.1">
    <property type="nucleotide sequence ID" value="NC_007292.1"/>
</dbReference>
<dbReference type="SMR" id="Q493P6"/>
<dbReference type="STRING" id="291272.BPEN_151"/>
<dbReference type="KEGG" id="bpn:BPEN_151"/>
<dbReference type="eggNOG" id="COG0774">
    <property type="taxonomic scope" value="Bacteria"/>
</dbReference>
<dbReference type="HOGENOM" id="CLU_046528_1_0_6"/>
<dbReference type="OrthoDB" id="9802746at2"/>
<dbReference type="UniPathway" id="UPA00359">
    <property type="reaction ID" value="UER00478"/>
</dbReference>
<dbReference type="Proteomes" id="UP000007794">
    <property type="component" value="Chromosome"/>
</dbReference>
<dbReference type="GO" id="GO:0016020">
    <property type="term" value="C:membrane"/>
    <property type="evidence" value="ECO:0007669"/>
    <property type="project" value="GOC"/>
</dbReference>
<dbReference type="GO" id="GO:0046872">
    <property type="term" value="F:metal ion binding"/>
    <property type="evidence" value="ECO:0007669"/>
    <property type="project" value="UniProtKB-KW"/>
</dbReference>
<dbReference type="GO" id="GO:0103117">
    <property type="term" value="F:UDP-3-O-acyl-N-acetylglucosamine deacetylase activity"/>
    <property type="evidence" value="ECO:0007669"/>
    <property type="project" value="UniProtKB-UniRule"/>
</dbReference>
<dbReference type="GO" id="GO:0009245">
    <property type="term" value="P:lipid A biosynthetic process"/>
    <property type="evidence" value="ECO:0007669"/>
    <property type="project" value="UniProtKB-UniRule"/>
</dbReference>
<dbReference type="Gene3D" id="3.30.230.20">
    <property type="entry name" value="lpxc deacetylase, domain 1"/>
    <property type="match status" value="1"/>
</dbReference>
<dbReference type="Gene3D" id="3.30.1700.10">
    <property type="entry name" value="lpxc deacetylase, domain 2"/>
    <property type="match status" value="1"/>
</dbReference>
<dbReference type="HAMAP" id="MF_00388">
    <property type="entry name" value="LpxC"/>
    <property type="match status" value="1"/>
</dbReference>
<dbReference type="InterPro" id="IPR020568">
    <property type="entry name" value="Ribosomal_Su5_D2-typ_SF"/>
</dbReference>
<dbReference type="InterPro" id="IPR004463">
    <property type="entry name" value="UDP-acyl_GlcNac_deAcase"/>
</dbReference>
<dbReference type="InterPro" id="IPR011334">
    <property type="entry name" value="UDP-acyl_GlcNac_deAcase_C"/>
</dbReference>
<dbReference type="InterPro" id="IPR015870">
    <property type="entry name" value="UDP-acyl_N-AcGlcN_deAcase_N"/>
</dbReference>
<dbReference type="NCBIfam" id="TIGR00325">
    <property type="entry name" value="lpxC"/>
    <property type="match status" value="1"/>
</dbReference>
<dbReference type="PANTHER" id="PTHR33694">
    <property type="entry name" value="UDP-3-O-ACYL-N-ACETYLGLUCOSAMINE DEACETYLASE 1, MITOCHONDRIAL-RELATED"/>
    <property type="match status" value="1"/>
</dbReference>
<dbReference type="PANTHER" id="PTHR33694:SF1">
    <property type="entry name" value="UDP-3-O-ACYL-N-ACETYLGLUCOSAMINE DEACETYLASE 1, MITOCHONDRIAL-RELATED"/>
    <property type="match status" value="1"/>
</dbReference>
<dbReference type="Pfam" id="PF03331">
    <property type="entry name" value="LpxC"/>
    <property type="match status" value="1"/>
</dbReference>
<dbReference type="SUPFAM" id="SSF54211">
    <property type="entry name" value="Ribosomal protein S5 domain 2-like"/>
    <property type="match status" value="2"/>
</dbReference>
<reference key="1">
    <citation type="journal article" date="2005" name="Genome Res.">
        <title>Genome sequence of Blochmannia pennsylvanicus indicates parallel evolutionary trends among bacterial mutualists of insects.</title>
        <authorList>
            <person name="Degnan P.H."/>
            <person name="Lazarus A.B."/>
            <person name="Wernegreen J.J."/>
        </authorList>
    </citation>
    <scope>NUCLEOTIDE SEQUENCE [LARGE SCALE GENOMIC DNA]</scope>
    <source>
        <strain>BPEN</strain>
    </source>
</reference>
<gene>
    <name evidence="1" type="primary">lpxC</name>
    <name type="ordered locus">BPEN_151</name>
</gene>